<sequence length="492" mass="55712">MANHPLSSSRSNRPFFVRSLAGHTSNLIIPDEFFTAHLEGKTGLTKLKLTSDASDRIWDVRLNGRRFAGGWDDFSAAHCLRDDDVLVFRLDVKMVFHVTPSGRSFSQIRTSSSSGDYDSDDDDDEAGDDDSDSKNISLKKKSRFEAESSSSEKYCLLGLTASNLRLNRVSFTKHFSRANGLTKRCCMIDLMNLSGESWTLGLRHNKRTGQAFIRGRWRSFCHANELKPGSFYRFKLVRNGTRPLLQLCFKVIPQGNCSNSKANGKANVSEKYSREDGSASTKQNKFLTVTLKHYMIQSGQLRLRRSFVRENGIKEAEEIILVDKNGVEWPSYVSSSKQRREFYMAHGWIRFCEANKLKTGETFTLEFVRGEGTTPMLKFCSEAKIEQEEAPEERGTPLPKRARVSAEVGHSRRTQAPNKSSDDPKILQRKQPLQPCSFSDQAKKVKQSIVNILTGIKRFRSELELKERNLEAALLEIDALGDKVSEINKILK</sequence>
<comment type="subcellular location">
    <subcellularLocation>
        <location evidence="1">Nucleus</location>
    </subcellularLocation>
</comment>
<comment type="sequence caution" evidence="3">
    <conflict type="erroneous gene model prediction">
        <sequence resource="EMBL-CDS" id="CAA19761"/>
    </conflict>
    <text>The predicted gene At4g31620 has been split into 2 genes: At4g31615 and At4g31620.</text>
</comment>
<comment type="sequence caution" evidence="3">
    <conflict type="erroneous gene model prediction">
        <sequence resource="EMBL-CDS" id="CAB79880"/>
    </conflict>
    <text>The predicted gene At4g31620 has been split into 2 genes: At4g31615 and At4g31620.</text>
</comment>
<keyword id="KW-0238">DNA-binding</keyword>
<keyword id="KW-0539">Nucleus</keyword>
<keyword id="KW-1185">Reference proteome</keyword>
<keyword id="KW-0677">Repeat</keyword>
<keyword id="KW-0804">Transcription</keyword>
<keyword id="KW-0805">Transcription regulation</keyword>
<protein>
    <recommendedName>
        <fullName>B3 domain-containing protein REM3</fullName>
    </recommendedName>
    <alternativeName>
        <fullName>Protein REPRODUCTIVE MERISTEM 3</fullName>
    </alternativeName>
</protein>
<reference key="1">
    <citation type="journal article" date="1999" name="Nature">
        <title>Sequence and analysis of chromosome 4 of the plant Arabidopsis thaliana.</title>
        <authorList>
            <person name="Mayer K.F.X."/>
            <person name="Schueller C."/>
            <person name="Wambutt R."/>
            <person name="Murphy G."/>
            <person name="Volckaert G."/>
            <person name="Pohl T."/>
            <person name="Duesterhoeft A."/>
            <person name="Stiekema W."/>
            <person name="Entian K.-D."/>
            <person name="Terryn N."/>
            <person name="Harris B."/>
            <person name="Ansorge W."/>
            <person name="Brandt P."/>
            <person name="Grivell L.A."/>
            <person name="Rieger M."/>
            <person name="Weichselgartner M."/>
            <person name="de Simone V."/>
            <person name="Obermaier B."/>
            <person name="Mache R."/>
            <person name="Mueller M."/>
            <person name="Kreis M."/>
            <person name="Delseny M."/>
            <person name="Puigdomenech P."/>
            <person name="Watson M."/>
            <person name="Schmidtheini T."/>
            <person name="Reichert B."/>
            <person name="Portetelle D."/>
            <person name="Perez-Alonso M."/>
            <person name="Boutry M."/>
            <person name="Bancroft I."/>
            <person name="Vos P."/>
            <person name="Hoheisel J."/>
            <person name="Zimmermann W."/>
            <person name="Wedler H."/>
            <person name="Ridley P."/>
            <person name="Langham S.-A."/>
            <person name="McCullagh B."/>
            <person name="Bilham L."/>
            <person name="Robben J."/>
            <person name="van der Schueren J."/>
            <person name="Grymonprez B."/>
            <person name="Chuang Y.-J."/>
            <person name="Vandenbussche F."/>
            <person name="Braeken M."/>
            <person name="Weltjens I."/>
            <person name="Voet M."/>
            <person name="Bastiaens I."/>
            <person name="Aert R."/>
            <person name="Defoor E."/>
            <person name="Weitzenegger T."/>
            <person name="Bothe G."/>
            <person name="Ramsperger U."/>
            <person name="Hilbert H."/>
            <person name="Braun M."/>
            <person name="Holzer E."/>
            <person name="Brandt A."/>
            <person name="Peters S."/>
            <person name="van Staveren M."/>
            <person name="Dirkse W."/>
            <person name="Mooijman P."/>
            <person name="Klein Lankhorst R."/>
            <person name="Rose M."/>
            <person name="Hauf J."/>
            <person name="Koetter P."/>
            <person name="Berneiser S."/>
            <person name="Hempel S."/>
            <person name="Feldpausch M."/>
            <person name="Lamberth S."/>
            <person name="Van den Daele H."/>
            <person name="De Keyser A."/>
            <person name="Buysshaert C."/>
            <person name="Gielen J."/>
            <person name="Villarroel R."/>
            <person name="De Clercq R."/>
            <person name="van Montagu M."/>
            <person name="Rogers J."/>
            <person name="Cronin A."/>
            <person name="Quail M.A."/>
            <person name="Bray-Allen S."/>
            <person name="Clark L."/>
            <person name="Doggett J."/>
            <person name="Hall S."/>
            <person name="Kay M."/>
            <person name="Lennard N."/>
            <person name="McLay K."/>
            <person name="Mayes R."/>
            <person name="Pettett A."/>
            <person name="Rajandream M.A."/>
            <person name="Lyne M."/>
            <person name="Benes V."/>
            <person name="Rechmann S."/>
            <person name="Borkova D."/>
            <person name="Bloecker H."/>
            <person name="Scharfe M."/>
            <person name="Grimm M."/>
            <person name="Loehnert T.-H."/>
            <person name="Dose S."/>
            <person name="de Haan M."/>
            <person name="Maarse A.C."/>
            <person name="Schaefer M."/>
            <person name="Mueller-Auer S."/>
            <person name="Gabel C."/>
            <person name="Fuchs M."/>
            <person name="Fartmann B."/>
            <person name="Granderath K."/>
            <person name="Dauner D."/>
            <person name="Herzl A."/>
            <person name="Neumann S."/>
            <person name="Argiriou A."/>
            <person name="Vitale D."/>
            <person name="Liguori R."/>
            <person name="Piravandi E."/>
            <person name="Massenet O."/>
            <person name="Quigley F."/>
            <person name="Clabauld G."/>
            <person name="Muendlein A."/>
            <person name="Felber R."/>
            <person name="Schnabl S."/>
            <person name="Hiller R."/>
            <person name="Schmidt W."/>
            <person name="Lecharny A."/>
            <person name="Aubourg S."/>
            <person name="Chefdor F."/>
            <person name="Cooke R."/>
            <person name="Berger C."/>
            <person name="Monfort A."/>
            <person name="Casacuberta E."/>
            <person name="Gibbons T."/>
            <person name="Weber N."/>
            <person name="Vandenbol M."/>
            <person name="Bargues M."/>
            <person name="Terol J."/>
            <person name="Torres A."/>
            <person name="Perez-Perez A."/>
            <person name="Purnelle B."/>
            <person name="Bent E."/>
            <person name="Johnson S."/>
            <person name="Tacon D."/>
            <person name="Jesse T."/>
            <person name="Heijnen L."/>
            <person name="Schwarz S."/>
            <person name="Scholler P."/>
            <person name="Heber S."/>
            <person name="Francs P."/>
            <person name="Bielke C."/>
            <person name="Frishman D."/>
            <person name="Haase D."/>
            <person name="Lemcke K."/>
            <person name="Mewes H.-W."/>
            <person name="Stocker S."/>
            <person name="Zaccaria P."/>
            <person name="Bevan M."/>
            <person name="Wilson R.K."/>
            <person name="de la Bastide M."/>
            <person name="Habermann K."/>
            <person name="Parnell L."/>
            <person name="Dedhia N."/>
            <person name="Gnoj L."/>
            <person name="Schutz K."/>
            <person name="Huang E."/>
            <person name="Spiegel L."/>
            <person name="Sekhon M."/>
            <person name="Murray J."/>
            <person name="Sheet P."/>
            <person name="Cordes M."/>
            <person name="Abu-Threideh J."/>
            <person name="Stoneking T."/>
            <person name="Kalicki J."/>
            <person name="Graves T."/>
            <person name="Harmon G."/>
            <person name="Edwards J."/>
            <person name="Latreille P."/>
            <person name="Courtney L."/>
            <person name="Cloud J."/>
            <person name="Abbott A."/>
            <person name="Scott K."/>
            <person name="Johnson D."/>
            <person name="Minx P."/>
            <person name="Bentley D."/>
            <person name="Fulton B."/>
            <person name="Miller N."/>
            <person name="Greco T."/>
            <person name="Kemp K."/>
            <person name="Kramer J."/>
            <person name="Fulton L."/>
            <person name="Mardis E."/>
            <person name="Dante M."/>
            <person name="Pepin K."/>
            <person name="Hillier L.W."/>
            <person name="Nelson J."/>
            <person name="Spieth J."/>
            <person name="Ryan E."/>
            <person name="Andrews S."/>
            <person name="Geisel C."/>
            <person name="Layman D."/>
            <person name="Du H."/>
            <person name="Ali J."/>
            <person name="Berghoff A."/>
            <person name="Jones K."/>
            <person name="Drone K."/>
            <person name="Cotton M."/>
            <person name="Joshu C."/>
            <person name="Antonoiu B."/>
            <person name="Zidanic M."/>
            <person name="Strong C."/>
            <person name="Sun H."/>
            <person name="Lamar B."/>
            <person name="Yordan C."/>
            <person name="Ma P."/>
            <person name="Zhong J."/>
            <person name="Preston R."/>
            <person name="Vil D."/>
            <person name="Shekher M."/>
            <person name="Matero A."/>
            <person name="Shah R."/>
            <person name="Swaby I.K."/>
            <person name="O'Shaughnessy A."/>
            <person name="Rodriguez M."/>
            <person name="Hoffman J."/>
            <person name="Till S."/>
            <person name="Granat S."/>
            <person name="Shohdy N."/>
            <person name="Hasegawa A."/>
            <person name="Hameed A."/>
            <person name="Lodhi M."/>
            <person name="Johnson A."/>
            <person name="Chen E."/>
            <person name="Marra M.A."/>
            <person name="Martienssen R."/>
            <person name="McCombie W.R."/>
        </authorList>
    </citation>
    <scope>NUCLEOTIDE SEQUENCE [LARGE SCALE GENOMIC DNA]</scope>
    <source>
        <strain>cv. Columbia</strain>
    </source>
</reference>
<reference key="2">
    <citation type="journal article" date="2017" name="Plant J.">
        <title>Araport11: a complete reannotation of the Arabidopsis thaliana reference genome.</title>
        <authorList>
            <person name="Cheng C.Y."/>
            <person name="Krishnakumar V."/>
            <person name="Chan A.P."/>
            <person name="Thibaud-Nissen F."/>
            <person name="Schobel S."/>
            <person name="Town C.D."/>
        </authorList>
    </citation>
    <scope>GENOME REANNOTATION</scope>
    <source>
        <strain>cv. Columbia</strain>
    </source>
</reference>
<reference key="3">
    <citation type="journal article" date="2003" name="Science">
        <title>Empirical analysis of transcriptional activity in the Arabidopsis genome.</title>
        <authorList>
            <person name="Yamada K."/>
            <person name="Lim J."/>
            <person name="Dale J.M."/>
            <person name="Chen H."/>
            <person name="Shinn P."/>
            <person name="Palm C.J."/>
            <person name="Southwick A.M."/>
            <person name="Wu H.C."/>
            <person name="Kim C.J."/>
            <person name="Nguyen M."/>
            <person name="Pham P.K."/>
            <person name="Cheuk R.F."/>
            <person name="Karlin-Newmann G."/>
            <person name="Liu S.X."/>
            <person name="Lam B."/>
            <person name="Sakano H."/>
            <person name="Wu T."/>
            <person name="Yu G."/>
            <person name="Miranda M."/>
            <person name="Quach H.L."/>
            <person name="Tripp M."/>
            <person name="Chang C.H."/>
            <person name="Lee J.M."/>
            <person name="Toriumi M.J."/>
            <person name="Chan M.M."/>
            <person name="Tang C.C."/>
            <person name="Onodera C.S."/>
            <person name="Deng J.M."/>
            <person name="Akiyama K."/>
            <person name="Ansari Y."/>
            <person name="Arakawa T."/>
            <person name="Banh J."/>
            <person name="Banno F."/>
            <person name="Bowser L."/>
            <person name="Brooks S.Y."/>
            <person name="Carninci P."/>
            <person name="Chao Q."/>
            <person name="Choy N."/>
            <person name="Enju A."/>
            <person name="Goldsmith A.D."/>
            <person name="Gurjal M."/>
            <person name="Hansen N.F."/>
            <person name="Hayashizaki Y."/>
            <person name="Johnson-Hopson C."/>
            <person name="Hsuan V.W."/>
            <person name="Iida K."/>
            <person name="Karnes M."/>
            <person name="Khan S."/>
            <person name="Koesema E."/>
            <person name="Ishida J."/>
            <person name="Jiang P.X."/>
            <person name="Jones T."/>
            <person name="Kawai J."/>
            <person name="Kamiya A."/>
            <person name="Meyers C."/>
            <person name="Nakajima M."/>
            <person name="Narusaka M."/>
            <person name="Seki M."/>
            <person name="Sakurai T."/>
            <person name="Satou M."/>
            <person name="Tamse R."/>
            <person name="Vaysberg M."/>
            <person name="Wallender E.K."/>
            <person name="Wong C."/>
            <person name="Yamamura Y."/>
            <person name="Yuan S."/>
            <person name="Shinozaki K."/>
            <person name="Davis R.W."/>
            <person name="Theologis A."/>
            <person name="Ecker J.R."/>
        </authorList>
    </citation>
    <scope>NUCLEOTIDE SEQUENCE [LARGE SCALE MRNA]</scope>
    <source>
        <strain>cv. Columbia</strain>
    </source>
</reference>
<reference key="4">
    <citation type="journal article" date="2008" name="Trends Plant Sci.">
        <title>The plant B3 superfamily.</title>
        <authorList>
            <person name="Swaminathan K."/>
            <person name="Peterson K."/>
            <person name="Jack T."/>
        </authorList>
    </citation>
    <scope>GENE FAMILY</scope>
</reference>
<proteinExistence type="evidence at transcript level"/>
<dbReference type="EMBL" id="AL031004">
    <property type="protein sequence ID" value="CAA19761.1"/>
    <property type="status" value="ALT_SEQ"/>
    <property type="molecule type" value="Genomic_DNA"/>
</dbReference>
<dbReference type="EMBL" id="AL161579">
    <property type="protein sequence ID" value="CAB79880.1"/>
    <property type="status" value="ALT_SEQ"/>
    <property type="molecule type" value="Genomic_DNA"/>
</dbReference>
<dbReference type="EMBL" id="CP002687">
    <property type="status" value="NOT_ANNOTATED_CDS"/>
    <property type="molecule type" value="Genomic_DNA"/>
</dbReference>
<dbReference type="EMBL" id="AY063930">
    <property type="protein sequence ID" value="AAL36286.1"/>
    <property type="molecule type" value="mRNA"/>
</dbReference>
<dbReference type="EMBL" id="AY133753">
    <property type="protein sequence ID" value="AAM91687.1"/>
    <property type="molecule type" value="mRNA"/>
</dbReference>
<dbReference type="PIR" id="T05108">
    <property type="entry name" value="T05108"/>
</dbReference>
<dbReference type="SMR" id="Q8VZQ9"/>
<dbReference type="BioGRID" id="14576">
    <property type="interactions" value="3"/>
</dbReference>
<dbReference type="IntAct" id="Q8VZQ9">
    <property type="interactions" value="2"/>
</dbReference>
<dbReference type="STRING" id="3702.Q8VZQ9"/>
<dbReference type="GlyGen" id="Q8VZQ9">
    <property type="glycosylation" value="1 site"/>
</dbReference>
<dbReference type="iPTMnet" id="Q8VZQ9"/>
<dbReference type="PaxDb" id="3702-AT4G31620.1"/>
<dbReference type="Araport" id="AT4G31620"/>
<dbReference type="TAIR" id="AT4G31620">
    <property type="gene designation" value="REM36"/>
</dbReference>
<dbReference type="HOGENOM" id="CLU_014437_0_0_1"/>
<dbReference type="InParanoid" id="Q8VZQ9"/>
<dbReference type="PhylomeDB" id="Q8VZQ9"/>
<dbReference type="PRO" id="PR:Q8VZQ9"/>
<dbReference type="Proteomes" id="UP000006548">
    <property type="component" value="Chromosome 4"/>
</dbReference>
<dbReference type="ExpressionAtlas" id="Q8VZQ9">
    <property type="expression patterns" value="baseline and differential"/>
</dbReference>
<dbReference type="GO" id="GO:0005634">
    <property type="term" value="C:nucleus"/>
    <property type="evidence" value="ECO:0007669"/>
    <property type="project" value="UniProtKB-SubCell"/>
</dbReference>
<dbReference type="GO" id="GO:0003677">
    <property type="term" value="F:DNA binding"/>
    <property type="evidence" value="ECO:0007669"/>
    <property type="project" value="UniProtKB-KW"/>
</dbReference>
<dbReference type="GO" id="GO:0009561">
    <property type="term" value="P:megagametogenesis"/>
    <property type="evidence" value="ECO:0000316"/>
    <property type="project" value="TAIR"/>
</dbReference>
<dbReference type="GO" id="GO:0009555">
    <property type="term" value="P:pollen development"/>
    <property type="evidence" value="ECO:0000316"/>
    <property type="project" value="TAIR"/>
</dbReference>
<dbReference type="CDD" id="cd10017">
    <property type="entry name" value="B3_DNA"/>
    <property type="match status" value="3"/>
</dbReference>
<dbReference type="Gene3D" id="2.40.330.10">
    <property type="entry name" value="DNA-binding pseudobarrel domain"/>
    <property type="match status" value="3"/>
</dbReference>
<dbReference type="InterPro" id="IPR003340">
    <property type="entry name" value="B3_DNA-bd"/>
</dbReference>
<dbReference type="InterPro" id="IPR015300">
    <property type="entry name" value="DNA-bd_pseudobarrel_sf"/>
</dbReference>
<dbReference type="InterPro" id="IPR039218">
    <property type="entry name" value="REM_fam"/>
</dbReference>
<dbReference type="PANTHER" id="PTHR31674">
    <property type="entry name" value="B3 DOMAIN-CONTAINING PROTEIN REM-LIKE 3-RELATED"/>
    <property type="match status" value="1"/>
</dbReference>
<dbReference type="PANTHER" id="PTHR31674:SF62">
    <property type="entry name" value="B3 DOMAIN-CONTAINING PROTEIN REM14-RELATED"/>
    <property type="match status" value="1"/>
</dbReference>
<dbReference type="Pfam" id="PF02362">
    <property type="entry name" value="B3"/>
    <property type="match status" value="3"/>
</dbReference>
<dbReference type="SMART" id="SM01019">
    <property type="entry name" value="B3"/>
    <property type="match status" value="3"/>
</dbReference>
<dbReference type="SUPFAM" id="SSF101936">
    <property type="entry name" value="DNA-binding pseudobarrel domain"/>
    <property type="match status" value="3"/>
</dbReference>
<dbReference type="PROSITE" id="PS50863">
    <property type="entry name" value="B3"/>
    <property type="match status" value="3"/>
</dbReference>
<feature type="chain" id="PRO_0000375097" description="B3 domain-containing protein REM3">
    <location>
        <begin position="1"/>
        <end position="492"/>
    </location>
</feature>
<feature type="DNA-binding region" description="TF-B3 1" evidence="1">
    <location>
        <begin position="12"/>
        <end position="104"/>
    </location>
</feature>
<feature type="DNA-binding region" description="TF-B3 2" evidence="1">
    <location>
        <begin position="154"/>
        <end position="250"/>
    </location>
</feature>
<feature type="DNA-binding region" description="TF-B3 3" evidence="1">
    <location>
        <begin position="286"/>
        <end position="382"/>
    </location>
</feature>
<feature type="region of interest" description="Disordered" evidence="2">
    <location>
        <begin position="105"/>
        <end position="134"/>
    </location>
</feature>
<feature type="region of interest" description="Disordered" evidence="2">
    <location>
        <begin position="385"/>
        <end position="427"/>
    </location>
</feature>
<feature type="compositionally biased region" description="Low complexity" evidence="2">
    <location>
        <begin position="105"/>
        <end position="116"/>
    </location>
</feature>
<feature type="compositionally biased region" description="Acidic residues" evidence="2">
    <location>
        <begin position="117"/>
        <end position="131"/>
    </location>
</feature>
<feature type="compositionally biased region" description="Basic and acidic residues" evidence="2">
    <location>
        <begin position="385"/>
        <end position="395"/>
    </location>
</feature>
<evidence type="ECO:0000255" key="1">
    <source>
        <dbReference type="PROSITE-ProRule" id="PRU00326"/>
    </source>
</evidence>
<evidence type="ECO:0000256" key="2">
    <source>
        <dbReference type="SAM" id="MobiDB-lite"/>
    </source>
</evidence>
<evidence type="ECO:0000305" key="3"/>
<organism>
    <name type="scientific">Arabidopsis thaliana</name>
    <name type="common">Mouse-ear cress</name>
    <dbReference type="NCBI Taxonomy" id="3702"/>
    <lineage>
        <taxon>Eukaryota</taxon>
        <taxon>Viridiplantae</taxon>
        <taxon>Streptophyta</taxon>
        <taxon>Embryophyta</taxon>
        <taxon>Tracheophyta</taxon>
        <taxon>Spermatophyta</taxon>
        <taxon>Magnoliopsida</taxon>
        <taxon>eudicotyledons</taxon>
        <taxon>Gunneridae</taxon>
        <taxon>Pentapetalae</taxon>
        <taxon>rosids</taxon>
        <taxon>malvids</taxon>
        <taxon>Brassicales</taxon>
        <taxon>Brassicaceae</taxon>
        <taxon>Camelineae</taxon>
        <taxon>Arabidopsis</taxon>
    </lineage>
</organism>
<accession>Q8VZQ9</accession>
<accession>Q9SB78</accession>
<gene>
    <name type="primary">REM3</name>
    <name type="ordered locus">At4g31620</name>
    <name type="ORF">F28M20.190</name>
</gene>
<name>REM3_ARATH</name>